<accession>Q8KG25</accession>
<feature type="chain" id="PRO_0000133869" description="Enolase 2">
    <location>
        <begin position="1"/>
        <end position="437"/>
    </location>
</feature>
<feature type="active site" description="Proton donor" evidence="1">
    <location>
        <position position="204"/>
    </location>
</feature>
<feature type="active site" description="Proton acceptor" evidence="1">
    <location>
        <position position="349"/>
    </location>
</feature>
<feature type="binding site" evidence="1">
    <location>
        <position position="162"/>
    </location>
    <ligand>
        <name>(2R)-2-phosphoglycerate</name>
        <dbReference type="ChEBI" id="CHEBI:58289"/>
    </ligand>
</feature>
<feature type="binding site" evidence="1">
    <location>
        <position position="251"/>
    </location>
    <ligand>
        <name>Mg(2+)</name>
        <dbReference type="ChEBI" id="CHEBI:18420"/>
    </ligand>
</feature>
<feature type="binding site" evidence="1">
    <location>
        <position position="297"/>
    </location>
    <ligand>
        <name>Mg(2+)</name>
        <dbReference type="ChEBI" id="CHEBI:18420"/>
    </ligand>
</feature>
<feature type="binding site" evidence="1">
    <location>
        <position position="324"/>
    </location>
    <ligand>
        <name>Mg(2+)</name>
        <dbReference type="ChEBI" id="CHEBI:18420"/>
    </ligand>
</feature>
<feature type="binding site" evidence="1">
    <location>
        <position position="349"/>
    </location>
    <ligand>
        <name>(2R)-2-phosphoglycerate</name>
        <dbReference type="ChEBI" id="CHEBI:58289"/>
    </ligand>
</feature>
<feature type="binding site" evidence="1">
    <location>
        <position position="378"/>
    </location>
    <ligand>
        <name>(2R)-2-phosphoglycerate</name>
        <dbReference type="ChEBI" id="CHEBI:58289"/>
    </ligand>
</feature>
<feature type="binding site" evidence="1">
    <location>
        <position position="379"/>
    </location>
    <ligand>
        <name>(2R)-2-phosphoglycerate</name>
        <dbReference type="ChEBI" id="CHEBI:58289"/>
    </ligand>
</feature>
<feature type="binding site" evidence="1">
    <location>
        <position position="400"/>
    </location>
    <ligand>
        <name>(2R)-2-phosphoglycerate</name>
        <dbReference type="ChEBI" id="CHEBI:58289"/>
    </ligand>
</feature>
<sequence>MSVITRIHARQIMDSRGNPTVEVDVHTESSFGRAAVPSGASTGVHEAVELRDKDKSVFLGKGVLKAVENVNTLINDALLGMDVTEQEAIDAKLIELDGTPNKSKLGANAILGVSLACAKAGAEYSALPLYRYIGGTTAKTLPVPMMNVLNGGAHADNTVDFQEFMIMPIGFERYSDALRCGAEVFHSLKSLLHDRGLSTAVGDEGGFAPNVESNEQAIELVIEAIGMAGYKAGAPTDRGGLGDGHVMIALDPASSEFYDAEKKKYVFKKSSGRELSSEEMASYWADWASRYPIISIEDGMAEDDWEGWKMLTDKIGGRVQLVGDDLFVTNSKRLAEGIEKGVGNSILIKVNQIGTLTETLQAIELAKRNGYTSVISHRSGETEDTTIAQIAVATNAGQIKTGSMSRSDRMAKYNELLRIEEELGSTALYPGIGAFRV</sequence>
<comment type="function">
    <text evidence="1">Catalyzes the reversible conversion of 2-phosphoglycerate (2-PG) into phosphoenolpyruvate (PEP). It is essential for the degradation of carbohydrates via glycolysis.</text>
</comment>
<comment type="catalytic activity">
    <reaction evidence="1">
        <text>(2R)-2-phosphoglycerate = phosphoenolpyruvate + H2O</text>
        <dbReference type="Rhea" id="RHEA:10164"/>
        <dbReference type="ChEBI" id="CHEBI:15377"/>
        <dbReference type="ChEBI" id="CHEBI:58289"/>
        <dbReference type="ChEBI" id="CHEBI:58702"/>
        <dbReference type="EC" id="4.2.1.11"/>
    </reaction>
</comment>
<comment type="cofactor">
    <cofactor evidence="1">
        <name>Mg(2+)</name>
        <dbReference type="ChEBI" id="CHEBI:18420"/>
    </cofactor>
    <text evidence="1">Binds a second Mg(2+) ion via substrate during catalysis.</text>
</comment>
<comment type="pathway">
    <text evidence="1">Carbohydrate degradation; glycolysis; pyruvate from D-glyceraldehyde 3-phosphate: step 4/5.</text>
</comment>
<comment type="subcellular location">
    <subcellularLocation>
        <location evidence="1">Cytoplasm</location>
    </subcellularLocation>
    <subcellularLocation>
        <location evidence="1">Secreted</location>
    </subcellularLocation>
    <subcellularLocation>
        <location evidence="1">Cell surface</location>
    </subcellularLocation>
    <text evidence="1">Fractions of enolase are present in both the cytoplasm and on the cell surface.</text>
</comment>
<comment type="similarity">
    <text evidence="1">Belongs to the enolase family.</text>
</comment>
<keyword id="KW-0963">Cytoplasm</keyword>
<keyword id="KW-0324">Glycolysis</keyword>
<keyword id="KW-0456">Lyase</keyword>
<keyword id="KW-0460">Magnesium</keyword>
<keyword id="KW-0479">Metal-binding</keyword>
<keyword id="KW-1185">Reference proteome</keyword>
<keyword id="KW-0964">Secreted</keyword>
<name>ENO2_CHLTE</name>
<reference key="1">
    <citation type="journal article" date="2002" name="Proc. Natl. Acad. Sci. U.S.A.">
        <title>The complete genome sequence of Chlorobium tepidum TLS, a photosynthetic, anaerobic, green-sulfur bacterium.</title>
        <authorList>
            <person name="Eisen J.A."/>
            <person name="Nelson K.E."/>
            <person name="Paulsen I.T."/>
            <person name="Heidelberg J.F."/>
            <person name="Wu M."/>
            <person name="Dodson R.J."/>
            <person name="DeBoy R.T."/>
            <person name="Gwinn M.L."/>
            <person name="Nelson W.C."/>
            <person name="Haft D.H."/>
            <person name="Hickey E.K."/>
            <person name="Peterson J.D."/>
            <person name="Durkin A.S."/>
            <person name="Kolonay J.F."/>
            <person name="Yang F."/>
            <person name="Holt I.E."/>
            <person name="Umayam L.A."/>
            <person name="Mason T.M."/>
            <person name="Brenner M."/>
            <person name="Shea T.P."/>
            <person name="Parksey D.S."/>
            <person name="Nierman W.C."/>
            <person name="Feldblyum T.V."/>
            <person name="Hansen C.L."/>
            <person name="Craven M.B."/>
            <person name="Radune D."/>
            <person name="Vamathevan J.J."/>
            <person name="Khouri H.M."/>
            <person name="White O."/>
            <person name="Gruber T.M."/>
            <person name="Ketchum K.A."/>
            <person name="Venter J.C."/>
            <person name="Tettelin H."/>
            <person name="Bryant D.A."/>
            <person name="Fraser C.M."/>
        </authorList>
    </citation>
    <scope>NUCLEOTIDE SEQUENCE [LARGE SCALE GENOMIC DNA]</scope>
    <source>
        <strain>ATCC 49652 / DSM 12025 / NBRC 103806 / TLS</strain>
    </source>
</reference>
<dbReference type="EC" id="4.2.1.11" evidence="1"/>
<dbReference type="EMBL" id="AE006470">
    <property type="protein sequence ID" value="AAM71393.1"/>
    <property type="molecule type" value="Genomic_DNA"/>
</dbReference>
<dbReference type="RefSeq" id="NP_661051.1">
    <property type="nucleotide sequence ID" value="NC_002932.3"/>
</dbReference>
<dbReference type="RefSeq" id="WP_010931839.1">
    <property type="nucleotide sequence ID" value="NC_002932.3"/>
</dbReference>
<dbReference type="SMR" id="Q8KG25"/>
<dbReference type="STRING" id="194439.CT0145"/>
<dbReference type="EnsemblBacteria" id="AAM71393">
    <property type="protein sequence ID" value="AAM71393"/>
    <property type="gene ID" value="CT0145"/>
</dbReference>
<dbReference type="KEGG" id="cte:CT0145"/>
<dbReference type="PATRIC" id="fig|194439.7.peg.142"/>
<dbReference type="eggNOG" id="COG0148">
    <property type="taxonomic scope" value="Bacteria"/>
</dbReference>
<dbReference type="HOGENOM" id="CLU_031223_2_1_10"/>
<dbReference type="OrthoDB" id="9804716at2"/>
<dbReference type="UniPathway" id="UPA00109">
    <property type="reaction ID" value="UER00187"/>
</dbReference>
<dbReference type="Proteomes" id="UP000001007">
    <property type="component" value="Chromosome"/>
</dbReference>
<dbReference type="GO" id="GO:0009986">
    <property type="term" value="C:cell surface"/>
    <property type="evidence" value="ECO:0007669"/>
    <property type="project" value="UniProtKB-SubCell"/>
</dbReference>
<dbReference type="GO" id="GO:0005576">
    <property type="term" value="C:extracellular region"/>
    <property type="evidence" value="ECO:0007669"/>
    <property type="project" value="UniProtKB-SubCell"/>
</dbReference>
<dbReference type="GO" id="GO:0000015">
    <property type="term" value="C:phosphopyruvate hydratase complex"/>
    <property type="evidence" value="ECO:0007669"/>
    <property type="project" value="InterPro"/>
</dbReference>
<dbReference type="GO" id="GO:0000287">
    <property type="term" value="F:magnesium ion binding"/>
    <property type="evidence" value="ECO:0007669"/>
    <property type="project" value="UniProtKB-UniRule"/>
</dbReference>
<dbReference type="GO" id="GO:0004634">
    <property type="term" value="F:phosphopyruvate hydratase activity"/>
    <property type="evidence" value="ECO:0007669"/>
    <property type="project" value="UniProtKB-UniRule"/>
</dbReference>
<dbReference type="GO" id="GO:0006096">
    <property type="term" value="P:glycolytic process"/>
    <property type="evidence" value="ECO:0007669"/>
    <property type="project" value="UniProtKB-UniRule"/>
</dbReference>
<dbReference type="CDD" id="cd03313">
    <property type="entry name" value="enolase"/>
    <property type="match status" value="1"/>
</dbReference>
<dbReference type="FunFam" id="3.20.20.120:FF:000001">
    <property type="entry name" value="Enolase"/>
    <property type="match status" value="1"/>
</dbReference>
<dbReference type="FunFam" id="3.30.390.10:FF:000001">
    <property type="entry name" value="Enolase"/>
    <property type="match status" value="1"/>
</dbReference>
<dbReference type="Gene3D" id="3.20.20.120">
    <property type="entry name" value="Enolase-like C-terminal domain"/>
    <property type="match status" value="1"/>
</dbReference>
<dbReference type="Gene3D" id="3.30.390.10">
    <property type="entry name" value="Enolase-like, N-terminal domain"/>
    <property type="match status" value="1"/>
</dbReference>
<dbReference type="HAMAP" id="MF_00318">
    <property type="entry name" value="Enolase"/>
    <property type="match status" value="1"/>
</dbReference>
<dbReference type="InterPro" id="IPR000941">
    <property type="entry name" value="Enolase"/>
</dbReference>
<dbReference type="InterPro" id="IPR036849">
    <property type="entry name" value="Enolase-like_C_sf"/>
</dbReference>
<dbReference type="InterPro" id="IPR029017">
    <property type="entry name" value="Enolase-like_N"/>
</dbReference>
<dbReference type="InterPro" id="IPR020810">
    <property type="entry name" value="Enolase_C"/>
</dbReference>
<dbReference type="InterPro" id="IPR020809">
    <property type="entry name" value="Enolase_CS"/>
</dbReference>
<dbReference type="InterPro" id="IPR020811">
    <property type="entry name" value="Enolase_N"/>
</dbReference>
<dbReference type="NCBIfam" id="TIGR01060">
    <property type="entry name" value="eno"/>
    <property type="match status" value="1"/>
</dbReference>
<dbReference type="PANTHER" id="PTHR11902">
    <property type="entry name" value="ENOLASE"/>
    <property type="match status" value="1"/>
</dbReference>
<dbReference type="PANTHER" id="PTHR11902:SF1">
    <property type="entry name" value="ENOLASE"/>
    <property type="match status" value="1"/>
</dbReference>
<dbReference type="Pfam" id="PF00113">
    <property type="entry name" value="Enolase_C"/>
    <property type="match status" value="1"/>
</dbReference>
<dbReference type="Pfam" id="PF03952">
    <property type="entry name" value="Enolase_N"/>
    <property type="match status" value="1"/>
</dbReference>
<dbReference type="PIRSF" id="PIRSF001400">
    <property type="entry name" value="Enolase"/>
    <property type="match status" value="1"/>
</dbReference>
<dbReference type="PRINTS" id="PR00148">
    <property type="entry name" value="ENOLASE"/>
</dbReference>
<dbReference type="SFLD" id="SFLDS00001">
    <property type="entry name" value="Enolase"/>
    <property type="match status" value="1"/>
</dbReference>
<dbReference type="SFLD" id="SFLDF00002">
    <property type="entry name" value="enolase"/>
    <property type="match status" value="1"/>
</dbReference>
<dbReference type="SMART" id="SM01192">
    <property type="entry name" value="Enolase_C"/>
    <property type="match status" value="1"/>
</dbReference>
<dbReference type="SMART" id="SM01193">
    <property type="entry name" value="Enolase_N"/>
    <property type="match status" value="1"/>
</dbReference>
<dbReference type="SUPFAM" id="SSF51604">
    <property type="entry name" value="Enolase C-terminal domain-like"/>
    <property type="match status" value="1"/>
</dbReference>
<dbReference type="SUPFAM" id="SSF54826">
    <property type="entry name" value="Enolase N-terminal domain-like"/>
    <property type="match status" value="1"/>
</dbReference>
<dbReference type="PROSITE" id="PS00164">
    <property type="entry name" value="ENOLASE"/>
    <property type="match status" value="1"/>
</dbReference>
<organism>
    <name type="scientific">Chlorobaculum tepidum (strain ATCC 49652 / DSM 12025 / NBRC 103806 / TLS)</name>
    <name type="common">Chlorobium tepidum</name>
    <dbReference type="NCBI Taxonomy" id="194439"/>
    <lineage>
        <taxon>Bacteria</taxon>
        <taxon>Pseudomonadati</taxon>
        <taxon>Chlorobiota</taxon>
        <taxon>Chlorobiia</taxon>
        <taxon>Chlorobiales</taxon>
        <taxon>Chlorobiaceae</taxon>
        <taxon>Chlorobaculum</taxon>
    </lineage>
</organism>
<proteinExistence type="inferred from homology"/>
<gene>
    <name evidence="1" type="primary">eno2</name>
    <name type="synonym">eno-2</name>
    <name type="ordered locus">CT0145</name>
</gene>
<protein>
    <recommendedName>
        <fullName evidence="1">Enolase 2</fullName>
        <ecNumber evidence="1">4.2.1.11</ecNumber>
    </recommendedName>
    <alternativeName>
        <fullName evidence="1">2-phospho-D-glycerate hydro-lyase 2</fullName>
    </alternativeName>
    <alternativeName>
        <fullName evidence="1">2-phosphoglycerate dehydratase 2</fullName>
    </alternativeName>
</protein>
<evidence type="ECO:0000255" key="1">
    <source>
        <dbReference type="HAMAP-Rule" id="MF_00318"/>
    </source>
</evidence>